<sequence>MKAVHFGAGNIGRGFIGYILADNNVKVTFADVNEEIINALAHDHQYDVILADESKTTTRVNNVDAINSMQPSEALKQAILEADIITTAVGVNILPIIAKSFAPFLKEKTNHVNIVACENAIMATDTLKKAVLDITGPLGNNIHFANSAVDRIVPLQKNENILDVMVEPFYEWVVEKDAWYGPELNHIKYVDDLTPYIERKLLTVNTGHAYLAYAGKFAGKATVLDAVEDSSIEAGLRRVLAETSQYITNEFDFTEAEQAAYVEKIIDRFNNSYLSDEVTRVGRGTLRKIGPKDRIIKPLTYLYNKDLERTGLLNTAALLLKYDDTADQETVEKNNYIKEHGLKAFLSEYAKVDDGLADEIIEAYNSLS</sequence>
<protein>
    <recommendedName>
        <fullName evidence="1">Mannitol-1-phosphate 5-dehydrogenase</fullName>
        <ecNumber evidence="1">1.1.1.17</ecNumber>
    </recommendedName>
</protein>
<keyword id="KW-0520">NAD</keyword>
<keyword id="KW-0560">Oxidoreductase</keyword>
<gene>
    <name evidence="1" type="primary">mtlD</name>
    <name type="ordered locus">USA300HOU_2149</name>
</gene>
<proteinExistence type="inferred from homology"/>
<comment type="catalytic activity">
    <reaction evidence="1">
        <text>D-mannitol 1-phosphate + NAD(+) = beta-D-fructose 6-phosphate + NADH + H(+)</text>
        <dbReference type="Rhea" id="RHEA:19661"/>
        <dbReference type="ChEBI" id="CHEBI:15378"/>
        <dbReference type="ChEBI" id="CHEBI:57540"/>
        <dbReference type="ChEBI" id="CHEBI:57634"/>
        <dbReference type="ChEBI" id="CHEBI:57945"/>
        <dbReference type="ChEBI" id="CHEBI:61381"/>
        <dbReference type="EC" id="1.1.1.17"/>
    </reaction>
</comment>
<comment type="similarity">
    <text evidence="1">Belongs to the mannitol dehydrogenase family.</text>
</comment>
<name>MTLD_STAAT</name>
<evidence type="ECO:0000255" key="1">
    <source>
        <dbReference type="HAMAP-Rule" id="MF_00196"/>
    </source>
</evidence>
<organism>
    <name type="scientific">Staphylococcus aureus (strain USA300 / TCH1516)</name>
    <dbReference type="NCBI Taxonomy" id="451516"/>
    <lineage>
        <taxon>Bacteria</taxon>
        <taxon>Bacillati</taxon>
        <taxon>Bacillota</taxon>
        <taxon>Bacilli</taxon>
        <taxon>Bacillales</taxon>
        <taxon>Staphylococcaceae</taxon>
        <taxon>Staphylococcus</taxon>
    </lineage>
</organism>
<accession>A8YYC5</accession>
<reference key="1">
    <citation type="journal article" date="2007" name="BMC Microbiol.">
        <title>Subtle genetic changes enhance virulence of methicillin resistant and sensitive Staphylococcus aureus.</title>
        <authorList>
            <person name="Highlander S.K."/>
            <person name="Hulten K.G."/>
            <person name="Qin X."/>
            <person name="Jiang H."/>
            <person name="Yerrapragada S."/>
            <person name="Mason E.O. Jr."/>
            <person name="Shang Y."/>
            <person name="Williams T.M."/>
            <person name="Fortunov R.M."/>
            <person name="Liu Y."/>
            <person name="Igboeli O."/>
            <person name="Petrosino J."/>
            <person name="Tirumalai M."/>
            <person name="Uzman A."/>
            <person name="Fox G.E."/>
            <person name="Cardenas A.M."/>
            <person name="Muzny D.M."/>
            <person name="Hemphill L."/>
            <person name="Ding Y."/>
            <person name="Dugan S."/>
            <person name="Blyth P.R."/>
            <person name="Buhay C.J."/>
            <person name="Dinh H.H."/>
            <person name="Hawes A.C."/>
            <person name="Holder M."/>
            <person name="Kovar C.L."/>
            <person name="Lee S.L."/>
            <person name="Liu W."/>
            <person name="Nazareth L.V."/>
            <person name="Wang Q."/>
            <person name="Zhou J."/>
            <person name="Kaplan S.L."/>
            <person name="Weinstock G.M."/>
        </authorList>
    </citation>
    <scope>NUCLEOTIDE SEQUENCE [LARGE SCALE GENOMIC DNA]</scope>
    <source>
        <strain>USA300 / TCH1516</strain>
    </source>
</reference>
<dbReference type="EC" id="1.1.1.17" evidence="1"/>
<dbReference type="EMBL" id="CP000730">
    <property type="protein sequence ID" value="ABX30145.1"/>
    <property type="molecule type" value="Genomic_DNA"/>
</dbReference>
<dbReference type="RefSeq" id="WP_000648718.1">
    <property type="nucleotide sequence ID" value="NC_010079.1"/>
</dbReference>
<dbReference type="SMR" id="A8YYC5"/>
<dbReference type="KEGG" id="sax:USA300HOU_2149"/>
<dbReference type="HOGENOM" id="CLU_036089_2_0_9"/>
<dbReference type="BRENDA" id="1.1.1.17">
    <property type="organism ID" value="3352"/>
</dbReference>
<dbReference type="GO" id="GO:0005829">
    <property type="term" value="C:cytosol"/>
    <property type="evidence" value="ECO:0007669"/>
    <property type="project" value="TreeGrafter"/>
</dbReference>
<dbReference type="GO" id="GO:0008926">
    <property type="term" value="F:mannitol-1-phosphate 5-dehydrogenase activity"/>
    <property type="evidence" value="ECO:0007669"/>
    <property type="project" value="UniProtKB-UniRule"/>
</dbReference>
<dbReference type="GO" id="GO:0019592">
    <property type="term" value="P:mannitol catabolic process"/>
    <property type="evidence" value="ECO:0007669"/>
    <property type="project" value="TreeGrafter"/>
</dbReference>
<dbReference type="FunFam" id="3.40.50.720:FF:000316">
    <property type="entry name" value="Mannitol-1-phosphate 5-dehydrogenase"/>
    <property type="match status" value="1"/>
</dbReference>
<dbReference type="Gene3D" id="1.10.1040.10">
    <property type="entry name" value="N-(1-d-carboxylethyl)-l-norvaline Dehydrogenase, domain 2"/>
    <property type="match status" value="1"/>
</dbReference>
<dbReference type="Gene3D" id="3.40.50.720">
    <property type="entry name" value="NAD(P)-binding Rossmann-like Domain"/>
    <property type="match status" value="1"/>
</dbReference>
<dbReference type="HAMAP" id="MF_00196">
    <property type="entry name" value="Mannitol_dehydrog"/>
    <property type="match status" value="1"/>
</dbReference>
<dbReference type="InterPro" id="IPR008927">
    <property type="entry name" value="6-PGluconate_DH-like_C_sf"/>
</dbReference>
<dbReference type="InterPro" id="IPR013328">
    <property type="entry name" value="6PGD_dom2"/>
</dbReference>
<dbReference type="InterPro" id="IPR023028">
    <property type="entry name" value="Mannitol_1_phos_5_DH"/>
</dbReference>
<dbReference type="InterPro" id="IPR000669">
    <property type="entry name" value="Mannitol_DH"/>
</dbReference>
<dbReference type="InterPro" id="IPR013118">
    <property type="entry name" value="Mannitol_DH_C"/>
</dbReference>
<dbReference type="InterPro" id="IPR023027">
    <property type="entry name" value="Mannitol_DH_CS"/>
</dbReference>
<dbReference type="InterPro" id="IPR013131">
    <property type="entry name" value="Mannitol_DH_N"/>
</dbReference>
<dbReference type="InterPro" id="IPR036291">
    <property type="entry name" value="NAD(P)-bd_dom_sf"/>
</dbReference>
<dbReference type="NCBIfam" id="NF002645">
    <property type="entry name" value="PRK02318.1-1"/>
    <property type="match status" value="1"/>
</dbReference>
<dbReference type="NCBIfam" id="NF002652">
    <property type="entry name" value="PRK02318.2-5"/>
    <property type="match status" value="1"/>
</dbReference>
<dbReference type="PANTHER" id="PTHR30524:SF0">
    <property type="entry name" value="ALTRONATE OXIDOREDUCTASE-RELATED"/>
    <property type="match status" value="1"/>
</dbReference>
<dbReference type="PANTHER" id="PTHR30524">
    <property type="entry name" value="MANNITOL-1-PHOSPHATE 5-DEHYDROGENASE"/>
    <property type="match status" value="1"/>
</dbReference>
<dbReference type="Pfam" id="PF01232">
    <property type="entry name" value="Mannitol_dh"/>
    <property type="match status" value="1"/>
</dbReference>
<dbReference type="Pfam" id="PF08125">
    <property type="entry name" value="Mannitol_dh_C"/>
    <property type="match status" value="1"/>
</dbReference>
<dbReference type="PRINTS" id="PR00084">
    <property type="entry name" value="MTLDHDRGNASE"/>
</dbReference>
<dbReference type="SUPFAM" id="SSF48179">
    <property type="entry name" value="6-phosphogluconate dehydrogenase C-terminal domain-like"/>
    <property type="match status" value="1"/>
</dbReference>
<dbReference type="SUPFAM" id="SSF51735">
    <property type="entry name" value="NAD(P)-binding Rossmann-fold domains"/>
    <property type="match status" value="1"/>
</dbReference>
<dbReference type="PROSITE" id="PS00974">
    <property type="entry name" value="MANNITOL_DHGENASE"/>
    <property type="match status" value="1"/>
</dbReference>
<feature type="chain" id="PRO_1000077686" description="Mannitol-1-phosphate 5-dehydrogenase">
    <location>
        <begin position="1"/>
        <end position="368"/>
    </location>
</feature>
<feature type="binding site" evidence="1">
    <location>
        <begin position="3"/>
        <end position="14"/>
    </location>
    <ligand>
        <name>NAD(+)</name>
        <dbReference type="ChEBI" id="CHEBI:57540"/>
    </ligand>
</feature>